<name>TRPR_SHIDS</name>
<organism>
    <name type="scientific">Shigella dysenteriae serotype 1 (strain Sd197)</name>
    <dbReference type="NCBI Taxonomy" id="300267"/>
    <lineage>
        <taxon>Bacteria</taxon>
        <taxon>Pseudomonadati</taxon>
        <taxon>Pseudomonadota</taxon>
        <taxon>Gammaproteobacteria</taxon>
        <taxon>Enterobacterales</taxon>
        <taxon>Enterobacteriaceae</taxon>
        <taxon>Shigella</taxon>
    </lineage>
</organism>
<dbReference type="EMBL" id="CP000034">
    <property type="protein sequence ID" value="ABB64503.1"/>
    <property type="molecule type" value="Genomic_DNA"/>
</dbReference>
<dbReference type="RefSeq" id="WP_000068679.1">
    <property type="nucleotide sequence ID" value="NC_007606.1"/>
</dbReference>
<dbReference type="RefSeq" id="YP_405994.1">
    <property type="nucleotide sequence ID" value="NC_007606.1"/>
</dbReference>
<dbReference type="SMR" id="Q327K2"/>
<dbReference type="STRING" id="300267.SDY_4654"/>
<dbReference type="EnsemblBacteria" id="ABB64503">
    <property type="protein sequence ID" value="ABB64503"/>
    <property type="gene ID" value="SDY_4654"/>
</dbReference>
<dbReference type="GeneID" id="93777452"/>
<dbReference type="KEGG" id="sdy:SDY_4654"/>
<dbReference type="PATRIC" id="fig|300267.13.peg.5516"/>
<dbReference type="HOGENOM" id="CLU_147939_0_0_6"/>
<dbReference type="Proteomes" id="UP000002716">
    <property type="component" value="Chromosome"/>
</dbReference>
<dbReference type="GO" id="GO:0005737">
    <property type="term" value="C:cytoplasm"/>
    <property type="evidence" value="ECO:0007669"/>
    <property type="project" value="UniProtKB-SubCell"/>
</dbReference>
<dbReference type="GO" id="GO:0003700">
    <property type="term" value="F:DNA-binding transcription factor activity"/>
    <property type="evidence" value="ECO:0007669"/>
    <property type="project" value="InterPro"/>
</dbReference>
<dbReference type="GO" id="GO:0043565">
    <property type="term" value="F:sequence-specific DNA binding"/>
    <property type="evidence" value="ECO:0007669"/>
    <property type="project" value="InterPro"/>
</dbReference>
<dbReference type="GO" id="GO:0045892">
    <property type="term" value="P:negative regulation of DNA-templated transcription"/>
    <property type="evidence" value="ECO:0007669"/>
    <property type="project" value="UniProtKB-UniRule"/>
</dbReference>
<dbReference type="FunFam" id="1.10.1270.10:FF:000001">
    <property type="entry name" value="Trp operon repressor"/>
    <property type="match status" value="1"/>
</dbReference>
<dbReference type="Gene3D" id="1.10.1270.10">
    <property type="entry name" value="TrpR-like"/>
    <property type="match status" value="1"/>
</dbReference>
<dbReference type="HAMAP" id="MF_00475">
    <property type="entry name" value="Trp_repressor"/>
    <property type="match status" value="1"/>
</dbReference>
<dbReference type="InterPro" id="IPR000831">
    <property type="entry name" value="Trp_repress"/>
</dbReference>
<dbReference type="InterPro" id="IPR013335">
    <property type="entry name" value="Trp_repress_bac"/>
</dbReference>
<dbReference type="InterPro" id="IPR010921">
    <property type="entry name" value="Trp_repressor/repl_initiator"/>
</dbReference>
<dbReference type="InterPro" id="IPR038116">
    <property type="entry name" value="TrpR-like_sf"/>
</dbReference>
<dbReference type="NCBIfam" id="TIGR01321">
    <property type="entry name" value="TrpR"/>
    <property type="match status" value="1"/>
</dbReference>
<dbReference type="PANTHER" id="PTHR38025">
    <property type="entry name" value="TRP OPERON REPRESSOR"/>
    <property type="match status" value="1"/>
</dbReference>
<dbReference type="PANTHER" id="PTHR38025:SF1">
    <property type="entry name" value="TRP OPERON REPRESSOR"/>
    <property type="match status" value="1"/>
</dbReference>
<dbReference type="Pfam" id="PF01371">
    <property type="entry name" value="Trp_repressor"/>
    <property type="match status" value="1"/>
</dbReference>
<dbReference type="PIRSF" id="PIRSF003196">
    <property type="entry name" value="Trp_repressor"/>
    <property type="match status" value="1"/>
</dbReference>
<dbReference type="SUPFAM" id="SSF48295">
    <property type="entry name" value="TrpR-like"/>
    <property type="match status" value="1"/>
</dbReference>
<protein>
    <recommendedName>
        <fullName evidence="1">Trp operon repressor</fullName>
    </recommendedName>
</protein>
<comment type="function">
    <text evidence="1">This protein is an aporepressor. When complexed with L-tryptophan it binds the operator region of the trp operon (5'-ACTAGT-'3') and prevents the initiation of transcription. The complex also regulates trp repressor biosynthesis by binding to its regulatory region.</text>
</comment>
<comment type="subunit">
    <text evidence="1">Homodimer.</text>
</comment>
<comment type="subcellular location">
    <subcellularLocation>
        <location evidence="1">Cytoplasm</location>
    </subcellularLocation>
</comment>
<comment type="similarity">
    <text evidence="1">Belongs to the TrpR family.</text>
</comment>
<reference key="1">
    <citation type="journal article" date="2005" name="Nucleic Acids Res.">
        <title>Genome dynamics and diversity of Shigella species, the etiologic agents of bacillary dysentery.</title>
        <authorList>
            <person name="Yang F."/>
            <person name="Yang J."/>
            <person name="Zhang X."/>
            <person name="Chen L."/>
            <person name="Jiang Y."/>
            <person name="Yan Y."/>
            <person name="Tang X."/>
            <person name="Wang J."/>
            <person name="Xiong Z."/>
            <person name="Dong J."/>
            <person name="Xue Y."/>
            <person name="Zhu Y."/>
            <person name="Xu X."/>
            <person name="Sun L."/>
            <person name="Chen S."/>
            <person name="Nie H."/>
            <person name="Peng J."/>
            <person name="Xu J."/>
            <person name="Wang Y."/>
            <person name="Yuan Z."/>
            <person name="Wen Y."/>
            <person name="Yao Z."/>
            <person name="Shen Y."/>
            <person name="Qiang B."/>
            <person name="Hou Y."/>
            <person name="Yu J."/>
            <person name="Jin Q."/>
        </authorList>
    </citation>
    <scope>NUCLEOTIDE SEQUENCE [LARGE SCALE GENOMIC DNA]</scope>
    <source>
        <strain>Sd197</strain>
    </source>
</reference>
<accession>Q327K2</accession>
<gene>
    <name evidence="1" type="primary">trpR</name>
    <name type="ordered locus">SDY_4654</name>
</gene>
<keyword id="KW-0963">Cytoplasm</keyword>
<keyword id="KW-0238">DNA-binding</keyword>
<keyword id="KW-1185">Reference proteome</keyword>
<keyword id="KW-0678">Repressor</keyword>
<keyword id="KW-0804">Transcription</keyword>
<keyword id="KW-0805">Transcription regulation</keyword>
<feature type="chain" id="PRO_1000014049" description="Trp operon repressor">
    <location>
        <begin position="1"/>
        <end position="108"/>
    </location>
</feature>
<feature type="DNA-binding region" evidence="1">
    <location>
        <begin position="68"/>
        <end position="91"/>
    </location>
</feature>
<sequence>MAQQSPYSAAMAEQRHQEWLRFVDLLKNAYQNDLHLPLLNLMLTPDEREALGTRVRIVEELLRGEMSQRELKNELGAGIATITRGSNSLKAAPVELRQWLEEVLLKSD</sequence>
<proteinExistence type="inferred from homology"/>
<evidence type="ECO:0000255" key="1">
    <source>
        <dbReference type="HAMAP-Rule" id="MF_00475"/>
    </source>
</evidence>